<proteinExistence type="predicted"/>
<evidence type="ECO:0000255" key="1"/>
<evidence type="ECO:0000305" key="2"/>
<organismHost>
    <name type="scientific">Acidianus convivator</name>
    <dbReference type="NCBI Taxonomy" id="269667"/>
</organismHost>
<dbReference type="EMBL" id="EF432053">
    <property type="protein sequence ID" value="ABP73433.1"/>
    <property type="molecule type" value="Genomic_DNA"/>
</dbReference>
<dbReference type="RefSeq" id="YP_001210347.1">
    <property type="nucleotide sequence ID" value="NC_009452.1"/>
</dbReference>
<dbReference type="GeneID" id="5129816"/>
<dbReference type="KEGG" id="vg:5129816"/>
<dbReference type="Proteomes" id="UP000000513">
    <property type="component" value="Segment"/>
</dbReference>
<dbReference type="GO" id="GO:0033644">
    <property type="term" value="C:host cell membrane"/>
    <property type="evidence" value="ECO:0007669"/>
    <property type="project" value="UniProtKB-SubCell"/>
</dbReference>
<dbReference type="GO" id="GO:0016020">
    <property type="term" value="C:membrane"/>
    <property type="evidence" value="ECO:0007669"/>
    <property type="project" value="UniProtKB-KW"/>
</dbReference>
<accession>A4ZUC9</accession>
<sequence length="112" mass="13007">MSCQIYPSQMCPGKAYKNCKLNIMNFWEVICIYYFALQGSFLGILVNLPILVTTLPLLPPALFFYLMYLFALPLKDIFNIFFPSLDPILIPILIFFLVGVSRARLSKVFKWR</sequence>
<comment type="subcellular location">
    <subcellularLocation>
        <location evidence="2">Host membrane</location>
        <topology evidence="2">Multi-pass membrane protein</topology>
    </subcellularLocation>
</comment>
<organism>
    <name type="scientific">Acidianus bottle-shaped virus (isolate Italy/Pozzuoli)</name>
    <name type="common">ABV</name>
    <dbReference type="NCBI Taxonomy" id="654911"/>
    <lineage>
        <taxon>Viruses</taxon>
        <taxon>Viruses incertae sedis</taxon>
        <taxon>Ampullaviridae</taxon>
        <taxon>Bottigliavirus</taxon>
        <taxon>Bottigliavirus ABV</taxon>
    </lineage>
</organism>
<protein>
    <recommendedName>
        <fullName>Putative transmembrane protein ORF112</fullName>
    </recommendedName>
</protein>
<feature type="chain" id="PRO_0000384852" description="Putative transmembrane protein ORF112">
    <location>
        <begin position="1"/>
        <end position="112"/>
    </location>
</feature>
<feature type="transmembrane region" description="Helical" evidence="1">
    <location>
        <begin position="26"/>
        <end position="46"/>
    </location>
</feature>
<feature type="transmembrane region" description="Helical" evidence="1">
    <location>
        <begin position="50"/>
        <end position="70"/>
    </location>
</feature>
<feature type="transmembrane region" description="Helical" evidence="1">
    <location>
        <begin position="80"/>
        <end position="100"/>
    </location>
</feature>
<reference key="1">
    <citation type="journal article" date="2007" name="Virology">
        <title>Genome of the Acidianus bottle-shaped virus and insights into the replication and packaging mechanisms.</title>
        <authorList>
            <person name="Peng X."/>
            <person name="Basta T."/>
            <person name="Haring M."/>
            <person name="Garrett R.A."/>
            <person name="Prangishvili D."/>
        </authorList>
    </citation>
    <scope>NUCLEOTIDE SEQUENCE [GENOMIC DNA]</scope>
</reference>
<keyword id="KW-1043">Host membrane</keyword>
<keyword id="KW-0472">Membrane</keyword>
<keyword id="KW-1185">Reference proteome</keyword>
<keyword id="KW-0812">Transmembrane</keyword>
<keyword id="KW-1133">Transmembrane helix</keyword>
<gene>
    <name type="ORF">ORF112</name>
</gene>
<name>Y112_ABVP</name>